<comment type="function">
    <text evidence="1">Catalyzes the transfer of an acyl group from acyl-phosphate (acyl-PO(4)) to glycerol-3-phosphate (G3P) to form lysophosphatidic acid (LPA). This enzyme utilizes acyl-phosphate as fatty acyl donor, but not acyl-CoA or acyl-ACP.</text>
</comment>
<comment type="catalytic activity">
    <reaction evidence="1">
        <text>an acyl phosphate + sn-glycerol 3-phosphate = a 1-acyl-sn-glycero-3-phosphate + phosphate</text>
        <dbReference type="Rhea" id="RHEA:34075"/>
        <dbReference type="ChEBI" id="CHEBI:43474"/>
        <dbReference type="ChEBI" id="CHEBI:57597"/>
        <dbReference type="ChEBI" id="CHEBI:57970"/>
        <dbReference type="ChEBI" id="CHEBI:59918"/>
        <dbReference type="EC" id="2.3.1.275"/>
    </reaction>
</comment>
<comment type="pathway">
    <text evidence="1">Lipid metabolism; phospholipid metabolism.</text>
</comment>
<comment type="subunit">
    <text evidence="1">Probably interacts with PlsX.</text>
</comment>
<comment type="subcellular location">
    <subcellularLocation>
        <location evidence="1">Cell inner membrane</location>
        <topology evidence="1">Multi-pass membrane protein</topology>
    </subcellularLocation>
</comment>
<comment type="similarity">
    <text evidence="1">Belongs to the PlsY family.</text>
</comment>
<keyword id="KW-0997">Cell inner membrane</keyword>
<keyword id="KW-1003">Cell membrane</keyword>
<keyword id="KW-0444">Lipid biosynthesis</keyword>
<keyword id="KW-0443">Lipid metabolism</keyword>
<keyword id="KW-0472">Membrane</keyword>
<keyword id="KW-0594">Phospholipid biosynthesis</keyword>
<keyword id="KW-1208">Phospholipid metabolism</keyword>
<keyword id="KW-0808">Transferase</keyword>
<keyword id="KW-0812">Transmembrane</keyword>
<keyword id="KW-1133">Transmembrane helix</keyword>
<proteinExistence type="inferred from homology"/>
<name>PLSY_FRATN</name>
<organism>
    <name type="scientific">Francisella tularensis subsp. novicida (strain U112)</name>
    <dbReference type="NCBI Taxonomy" id="401614"/>
    <lineage>
        <taxon>Bacteria</taxon>
        <taxon>Pseudomonadati</taxon>
        <taxon>Pseudomonadota</taxon>
        <taxon>Gammaproteobacteria</taxon>
        <taxon>Thiotrichales</taxon>
        <taxon>Francisellaceae</taxon>
        <taxon>Francisella</taxon>
    </lineage>
</organism>
<sequence length="204" mass="21780">MNFLNFSILIFAYLLGSINSAIIVCYIFRLPSPRSVGSGNPGTTNVLRIGGKVPAAITLIFDILKGLVPVVIAKVLTGNEFITACTALYAILGHIFPIFFGFKGGKGVATLIGTLFGFSWILGLIFVITWLCVAIITRYSSLSALVATVIASFSVIFTSDLQVAAPFLIIAIIILVKHKGNIQRLISGQESKIGDKAKAKNDSN</sequence>
<protein>
    <recommendedName>
        <fullName evidence="1">Glycerol-3-phosphate acyltransferase</fullName>
    </recommendedName>
    <alternativeName>
        <fullName evidence="1">Acyl-PO4 G3P acyltransferase</fullName>
    </alternativeName>
    <alternativeName>
        <fullName evidence="1">Acyl-phosphate--glycerol-3-phosphate acyltransferase</fullName>
    </alternativeName>
    <alternativeName>
        <fullName evidence="1">G3P acyltransferase</fullName>
        <shortName evidence="1">GPAT</shortName>
        <ecNumber evidence="1">2.3.1.275</ecNumber>
    </alternativeName>
    <alternativeName>
        <fullName evidence="1">Lysophosphatidic acid synthase</fullName>
        <shortName evidence="1">LPA synthase</shortName>
    </alternativeName>
</protein>
<accession>A0Q6X6</accession>
<dbReference type="EC" id="2.3.1.275" evidence="1"/>
<dbReference type="EMBL" id="CP000439">
    <property type="protein sequence ID" value="ABK89991.1"/>
    <property type="molecule type" value="Genomic_DNA"/>
</dbReference>
<dbReference type="RefSeq" id="WP_003018671.1">
    <property type="nucleotide sequence ID" value="NZ_CP009633.1"/>
</dbReference>
<dbReference type="SMR" id="A0Q6X6"/>
<dbReference type="GeneID" id="75265159"/>
<dbReference type="KEGG" id="ftn:FTN_1105"/>
<dbReference type="KEGG" id="ftx:AW25_903"/>
<dbReference type="BioCyc" id="FTUL401614:G1G75-1147-MONOMER"/>
<dbReference type="UniPathway" id="UPA00085"/>
<dbReference type="Proteomes" id="UP000000762">
    <property type="component" value="Chromosome"/>
</dbReference>
<dbReference type="GO" id="GO:0005886">
    <property type="term" value="C:plasma membrane"/>
    <property type="evidence" value="ECO:0007669"/>
    <property type="project" value="UniProtKB-SubCell"/>
</dbReference>
<dbReference type="GO" id="GO:0043772">
    <property type="term" value="F:acyl-phosphate glycerol-3-phosphate acyltransferase activity"/>
    <property type="evidence" value="ECO:0007669"/>
    <property type="project" value="UniProtKB-UniRule"/>
</dbReference>
<dbReference type="GO" id="GO:0008654">
    <property type="term" value="P:phospholipid biosynthetic process"/>
    <property type="evidence" value="ECO:0007669"/>
    <property type="project" value="UniProtKB-UniRule"/>
</dbReference>
<dbReference type="HAMAP" id="MF_01043">
    <property type="entry name" value="PlsY"/>
    <property type="match status" value="1"/>
</dbReference>
<dbReference type="InterPro" id="IPR003811">
    <property type="entry name" value="G3P_acylTferase_PlsY"/>
</dbReference>
<dbReference type="NCBIfam" id="TIGR00023">
    <property type="entry name" value="glycerol-3-phosphate 1-O-acyltransferase PlsY"/>
    <property type="match status" value="1"/>
</dbReference>
<dbReference type="PANTHER" id="PTHR30309:SF0">
    <property type="entry name" value="GLYCEROL-3-PHOSPHATE ACYLTRANSFERASE-RELATED"/>
    <property type="match status" value="1"/>
</dbReference>
<dbReference type="PANTHER" id="PTHR30309">
    <property type="entry name" value="INNER MEMBRANE PROTEIN YGIH"/>
    <property type="match status" value="1"/>
</dbReference>
<dbReference type="Pfam" id="PF02660">
    <property type="entry name" value="G3P_acyltransf"/>
    <property type="match status" value="1"/>
</dbReference>
<dbReference type="SMART" id="SM01207">
    <property type="entry name" value="G3P_acyltransf"/>
    <property type="match status" value="1"/>
</dbReference>
<gene>
    <name evidence="1" type="primary">plsY</name>
    <name type="ordered locus">FTN_1105</name>
</gene>
<evidence type="ECO:0000255" key="1">
    <source>
        <dbReference type="HAMAP-Rule" id="MF_01043"/>
    </source>
</evidence>
<reference key="1">
    <citation type="journal article" date="2007" name="Genome Biol.">
        <title>Comparison of Francisella tularensis genomes reveals evolutionary events associated with the emergence of human pathogenic strains.</title>
        <authorList>
            <person name="Rohmer L."/>
            <person name="Fong C."/>
            <person name="Abmayr S."/>
            <person name="Wasnick M."/>
            <person name="Larson Freeman T.J."/>
            <person name="Radey M."/>
            <person name="Guina T."/>
            <person name="Svensson K."/>
            <person name="Hayden H.S."/>
            <person name="Jacobs M."/>
            <person name="Gallagher L.A."/>
            <person name="Manoil C."/>
            <person name="Ernst R.K."/>
            <person name="Drees B."/>
            <person name="Buckley D."/>
            <person name="Haugen E."/>
            <person name="Bovee D."/>
            <person name="Zhou Y."/>
            <person name="Chang J."/>
            <person name="Levy R."/>
            <person name="Lim R."/>
            <person name="Gillett W."/>
            <person name="Guenthener D."/>
            <person name="Kang A."/>
            <person name="Shaffer S.A."/>
            <person name="Taylor G."/>
            <person name="Chen J."/>
            <person name="Gallis B."/>
            <person name="D'Argenio D.A."/>
            <person name="Forsman M."/>
            <person name="Olson M.V."/>
            <person name="Goodlett D.R."/>
            <person name="Kaul R."/>
            <person name="Miller S.I."/>
            <person name="Brittnacher M.J."/>
        </authorList>
    </citation>
    <scope>NUCLEOTIDE SEQUENCE [LARGE SCALE GENOMIC DNA]</scope>
    <source>
        <strain>U112</strain>
    </source>
</reference>
<feature type="chain" id="PRO_1000064178" description="Glycerol-3-phosphate acyltransferase">
    <location>
        <begin position="1"/>
        <end position="204"/>
    </location>
</feature>
<feature type="transmembrane region" description="Helical" evidence="1">
    <location>
        <begin position="8"/>
        <end position="28"/>
    </location>
</feature>
<feature type="transmembrane region" description="Helical" evidence="1">
    <location>
        <begin position="53"/>
        <end position="73"/>
    </location>
</feature>
<feature type="transmembrane region" description="Helical" evidence="1">
    <location>
        <begin position="81"/>
        <end position="101"/>
    </location>
</feature>
<feature type="transmembrane region" description="Helical" evidence="1">
    <location>
        <begin position="116"/>
        <end position="136"/>
    </location>
</feature>
<feature type="transmembrane region" description="Helical" evidence="1">
    <location>
        <begin position="155"/>
        <end position="175"/>
    </location>
</feature>